<accession>Q7TUF5</accession>
<gene>
    <name evidence="1" type="primary">psbM</name>
    <name type="ordered locus">PMM0317</name>
</gene>
<reference key="1">
    <citation type="journal article" date="2003" name="Nature">
        <title>Genome divergence in two Prochlorococcus ecotypes reflects oceanic niche differentiation.</title>
        <authorList>
            <person name="Rocap G."/>
            <person name="Larimer F.W."/>
            <person name="Lamerdin J.E."/>
            <person name="Malfatti S."/>
            <person name="Chain P."/>
            <person name="Ahlgren N.A."/>
            <person name="Arellano A."/>
            <person name="Coleman M."/>
            <person name="Hauser L."/>
            <person name="Hess W.R."/>
            <person name="Johnson Z.I."/>
            <person name="Land M.L."/>
            <person name="Lindell D."/>
            <person name="Post A.F."/>
            <person name="Regala W."/>
            <person name="Shah M."/>
            <person name="Shaw S.L."/>
            <person name="Steglich C."/>
            <person name="Sullivan M.B."/>
            <person name="Ting C.S."/>
            <person name="Tolonen A."/>
            <person name="Webb E.A."/>
            <person name="Zinser E.R."/>
            <person name="Chisholm S.W."/>
        </authorList>
    </citation>
    <scope>NUCLEOTIDE SEQUENCE [LARGE SCALE GENOMIC DNA]</scope>
    <source>
        <strain>CCMP1986 / NIES-2087 / MED4</strain>
    </source>
</reference>
<keyword id="KW-0472">Membrane</keyword>
<keyword id="KW-0602">Photosynthesis</keyword>
<keyword id="KW-0604">Photosystem II</keyword>
<keyword id="KW-0674">Reaction center</keyword>
<keyword id="KW-0793">Thylakoid</keyword>
<keyword id="KW-0812">Transmembrane</keyword>
<keyword id="KW-1133">Transmembrane helix</keyword>
<proteinExistence type="inferred from homology"/>
<organism>
    <name type="scientific">Prochlorococcus marinus subsp. pastoris (strain CCMP1986 / NIES-2087 / MED4)</name>
    <dbReference type="NCBI Taxonomy" id="59919"/>
    <lineage>
        <taxon>Bacteria</taxon>
        <taxon>Bacillati</taxon>
        <taxon>Cyanobacteriota</taxon>
        <taxon>Cyanophyceae</taxon>
        <taxon>Synechococcales</taxon>
        <taxon>Prochlorococcaceae</taxon>
        <taxon>Prochlorococcus</taxon>
    </lineage>
</organism>
<name>PSBM_PROMP</name>
<evidence type="ECO:0000255" key="1">
    <source>
        <dbReference type="HAMAP-Rule" id="MF_00438"/>
    </source>
</evidence>
<evidence type="ECO:0000305" key="2"/>
<protein>
    <recommendedName>
        <fullName evidence="1">Photosystem II reaction center protein M</fullName>
        <shortName evidence="1">PSII-M</shortName>
    </recommendedName>
</protein>
<feature type="chain" id="PRO_0000217584" description="Photosystem II reaction center protein M">
    <location>
        <begin position="1"/>
        <end position="50"/>
    </location>
</feature>
<feature type="transmembrane region" description="Helical" evidence="1">
    <location>
        <begin position="7"/>
        <end position="27"/>
    </location>
</feature>
<sequence>METTNFGFVASLLFVGIPTIFLIGLFISTQDGEKSSFYSDSSKGKLGPKR</sequence>
<comment type="function">
    <text evidence="1">One of the components of the core complex of photosystem II (PSII). PSII is a light-driven water:plastoquinone oxidoreductase that uses light energy to abstract electrons from H(2)O, generating O(2) and a proton gradient subsequently used for ATP formation. It consists of a core antenna complex that captures photons, and an electron transfer chain that converts photonic excitation into a charge separation. This subunit is found at the monomer-monomer interface.</text>
</comment>
<comment type="subunit">
    <text evidence="2">PSII is composed of 1 copy each of membrane proteins PsbA, PsbB, PsbC, PsbD, PsbE, PsbF, PsbH, PsbI, PsbJ, PsbK, PsbL, PsbM, PsbT, PsbX, PsbY, Psb30/Ycf12, peripheral proteins PsbO, CyanoQ (PsbQ), PsbU, PsbV and a large number of cofactors. It forms dimeric complexes.</text>
</comment>
<comment type="subcellular location">
    <subcellularLocation>
        <location evidence="1">Cellular thylakoid membrane</location>
        <topology evidence="1">Single-pass membrane protein</topology>
    </subcellularLocation>
</comment>
<comment type="similarity">
    <text evidence="1">Belongs to the PsbM family.</text>
</comment>
<dbReference type="EMBL" id="BX548174">
    <property type="protein sequence ID" value="CAE18776.1"/>
    <property type="molecule type" value="Genomic_DNA"/>
</dbReference>
<dbReference type="RefSeq" id="WP_011131954.1">
    <property type="nucleotide sequence ID" value="NC_005072.1"/>
</dbReference>
<dbReference type="SMR" id="Q7TUF5"/>
<dbReference type="STRING" id="59919.PMM0317"/>
<dbReference type="KEGG" id="pmm:PMM0317"/>
<dbReference type="HOGENOM" id="CLU_215415_0_0_3"/>
<dbReference type="OrthoDB" id="532820at2"/>
<dbReference type="Proteomes" id="UP000001026">
    <property type="component" value="Chromosome"/>
</dbReference>
<dbReference type="GO" id="GO:0009523">
    <property type="term" value="C:photosystem II"/>
    <property type="evidence" value="ECO:0007669"/>
    <property type="project" value="UniProtKB-KW"/>
</dbReference>
<dbReference type="GO" id="GO:0031676">
    <property type="term" value="C:plasma membrane-derived thylakoid membrane"/>
    <property type="evidence" value="ECO:0007669"/>
    <property type="project" value="UniProtKB-SubCell"/>
</dbReference>
<dbReference type="GO" id="GO:0019684">
    <property type="term" value="P:photosynthesis, light reaction"/>
    <property type="evidence" value="ECO:0007669"/>
    <property type="project" value="InterPro"/>
</dbReference>
<dbReference type="HAMAP" id="MF_00438">
    <property type="entry name" value="PSII_PsbM"/>
    <property type="match status" value="1"/>
</dbReference>
<dbReference type="InterPro" id="IPR007826">
    <property type="entry name" value="PSII_PsbM"/>
</dbReference>
<dbReference type="InterPro" id="IPR037269">
    <property type="entry name" value="PSII_PsbM_sf"/>
</dbReference>
<dbReference type="NCBIfam" id="NF010694">
    <property type="entry name" value="PRK14094.1"/>
    <property type="match status" value="1"/>
</dbReference>
<dbReference type="NCBIfam" id="TIGR03038">
    <property type="entry name" value="PS_II_psbM"/>
    <property type="match status" value="1"/>
</dbReference>
<dbReference type="Pfam" id="PF05151">
    <property type="entry name" value="PsbM"/>
    <property type="match status" value="1"/>
</dbReference>
<dbReference type="SUPFAM" id="SSF161033">
    <property type="entry name" value="Photosystem II reaction center protein M, PsbM"/>
    <property type="match status" value="1"/>
</dbReference>